<accession>P79696</accession>
<reference key="1">
    <citation type="journal article" date="1996" name="Proc. Natl. Acad. Sci. U.S.A.">
        <title>Evolutionary analyses of hedgehog and Hoxd-10 genes in fish species closely related to the zebrafish.</title>
        <authorList>
            <person name="Zardoya R."/>
            <person name="Abouheif E."/>
            <person name="Meyer A."/>
        </authorList>
    </citation>
    <scope>NUCLEOTIDE SEQUENCE [GENOMIC DNA]</scope>
    <source>
        <tissue>Muscle</tissue>
    </source>
</reference>
<comment type="function">
    <text evidence="1">Intercellular signal essential for a variety of patterning events during development. Involved in dorso-ventral patterning of the brain and in early patterning of the developing eyes (By similarity).</text>
</comment>
<comment type="subcellular location">
    <subcellularLocation>
        <location evidence="1">Cell membrane</location>
    </subcellularLocation>
    <subcellularLocation>
        <location evidence="1">Secreted</location>
        <location evidence="1">Extracellular space</location>
    </subcellularLocation>
    <text evidence="1">Tiggy-winkle hedgehog protein N-product: Cell membrane; Lipid-anchor; Extracellular side. The N-terminal peptide remains associated with the cell surface. Tiggy-winkle hedgehog protein C-product: Secreted, extracellular space. The C-terminal peptide diffuses from the cell.</text>
</comment>
<comment type="PTM">
    <text evidence="1">The C-terminal domain displays an autoproteolysis activity and a cholesterol transferase activity. Both activities result in the cleavage of the full-length protein and covalent attachment of a cholesterol moiety to the C-terminal of the newly generated N-terminal fragment (N-product). This covalent modification appears to play an essential role in restricting the spatial distribution of the protein activity to the cell surface. The N-product is the active species in both local and long-range signaling, whereas the C-product has no signaling activity (By similarity).</text>
</comment>
<comment type="similarity">
    <text evidence="3">Belongs to the hedgehog family.</text>
</comment>
<name>TWHH_CARAU</name>
<proteinExistence type="inferred from homology"/>
<keyword id="KW-0068">Autocatalytic cleavage</keyword>
<keyword id="KW-0106">Calcium</keyword>
<keyword id="KW-1003">Cell membrane</keyword>
<keyword id="KW-0217">Developmental protein</keyword>
<keyword id="KW-0378">Hydrolase</keyword>
<keyword id="KW-0472">Membrane</keyword>
<keyword id="KW-0479">Metal-binding</keyword>
<keyword id="KW-0645">Protease</keyword>
<keyword id="KW-1185">Reference proteome</keyword>
<keyword id="KW-0964">Secreted</keyword>
<keyword id="KW-0862">Zinc</keyword>
<protein>
    <recommendedName>
        <fullName>Tiggy-winkle hedgehog protein</fullName>
    </recommendedName>
</protein>
<sequence>NSLAISVMNQWPGVKLRVTEGWDEDGHHFEESLHYEGRAVDITTSDRDKSKYG</sequence>
<organism>
    <name type="scientific">Carassius auratus</name>
    <name type="common">Goldfish</name>
    <dbReference type="NCBI Taxonomy" id="7957"/>
    <lineage>
        <taxon>Eukaryota</taxon>
        <taxon>Metazoa</taxon>
        <taxon>Chordata</taxon>
        <taxon>Craniata</taxon>
        <taxon>Vertebrata</taxon>
        <taxon>Euteleostomi</taxon>
        <taxon>Actinopterygii</taxon>
        <taxon>Neopterygii</taxon>
        <taxon>Teleostei</taxon>
        <taxon>Ostariophysi</taxon>
        <taxon>Cypriniformes</taxon>
        <taxon>Cyprinidae</taxon>
        <taxon>Cyprininae</taxon>
        <taxon>Carassius</taxon>
    </lineage>
</organism>
<dbReference type="EMBL" id="U68241">
    <property type="protein sequence ID" value="AAB38677.1"/>
    <property type="molecule type" value="Genomic_DNA"/>
</dbReference>
<dbReference type="SMR" id="P79696"/>
<dbReference type="Proteomes" id="UP000515129">
    <property type="component" value="Unplaced"/>
</dbReference>
<dbReference type="GO" id="GO:0005615">
    <property type="term" value="C:extracellular space"/>
    <property type="evidence" value="ECO:0007669"/>
    <property type="project" value="TreeGrafter"/>
</dbReference>
<dbReference type="GO" id="GO:0005886">
    <property type="term" value="C:plasma membrane"/>
    <property type="evidence" value="ECO:0007669"/>
    <property type="project" value="UniProtKB-SubCell"/>
</dbReference>
<dbReference type="GO" id="GO:0005509">
    <property type="term" value="F:calcium ion binding"/>
    <property type="evidence" value="ECO:0007669"/>
    <property type="project" value="TreeGrafter"/>
</dbReference>
<dbReference type="GO" id="GO:0005113">
    <property type="term" value="F:patched binding"/>
    <property type="evidence" value="ECO:0007669"/>
    <property type="project" value="TreeGrafter"/>
</dbReference>
<dbReference type="GO" id="GO:0008233">
    <property type="term" value="F:peptidase activity"/>
    <property type="evidence" value="ECO:0007669"/>
    <property type="project" value="UniProtKB-KW"/>
</dbReference>
<dbReference type="GO" id="GO:0048513">
    <property type="term" value="P:animal organ development"/>
    <property type="evidence" value="ECO:0007669"/>
    <property type="project" value="UniProtKB-ARBA"/>
</dbReference>
<dbReference type="GO" id="GO:0048468">
    <property type="term" value="P:cell development"/>
    <property type="evidence" value="ECO:0007669"/>
    <property type="project" value="UniProtKB-ARBA"/>
</dbReference>
<dbReference type="GO" id="GO:0001708">
    <property type="term" value="P:cell fate specification"/>
    <property type="evidence" value="ECO:0007669"/>
    <property type="project" value="TreeGrafter"/>
</dbReference>
<dbReference type="GO" id="GO:0007267">
    <property type="term" value="P:cell-cell signaling"/>
    <property type="evidence" value="ECO:0007669"/>
    <property type="project" value="InterPro"/>
</dbReference>
<dbReference type="GO" id="GO:0007417">
    <property type="term" value="P:central nervous system development"/>
    <property type="evidence" value="ECO:0007669"/>
    <property type="project" value="UniProtKB-ARBA"/>
</dbReference>
<dbReference type="GO" id="GO:0030182">
    <property type="term" value="P:neuron differentiation"/>
    <property type="evidence" value="ECO:0007669"/>
    <property type="project" value="UniProtKB-ARBA"/>
</dbReference>
<dbReference type="GO" id="GO:0006508">
    <property type="term" value="P:proteolysis"/>
    <property type="evidence" value="ECO:0007669"/>
    <property type="project" value="UniProtKB-KW"/>
</dbReference>
<dbReference type="GO" id="GO:0010468">
    <property type="term" value="P:regulation of gene expression"/>
    <property type="evidence" value="ECO:0007669"/>
    <property type="project" value="TreeGrafter"/>
</dbReference>
<dbReference type="GO" id="GO:0007224">
    <property type="term" value="P:smoothened signaling pathway"/>
    <property type="evidence" value="ECO:0007669"/>
    <property type="project" value="TreeGrafter"/>
</dbReference>
<dbReference type="GO" id="GO:0009888">
    <property type="term" value="P:tissue development"/>
    <property type="evidence" value="ECO:0007669"/>
    <property type="project" value="UniProtKB-ARBA"/>
</dbReference>
<dbReference type="Gene3D" id="3.30.1380.10">
    <property type="match status" value="1"/>
</dbReference>
<dbReference type="InterPro" id="IPR001657">
    <property type="entry name" value="Hedgehog"/>
</dbReference>
<dbReference type="InterPro" id="IPR009045">
    <property type="entry name" value="Hedgehog_sig/DD-Pept_Zn-bd_sf"/>
</dbReference>
<dbReference type="InterPro" id="IPR050387">
    <property type="entry name" value="Hedgehog_Signaling"/>
</dbReference>
<dbReference type="InterPro" id="IPR000320">
    <property type="entry name" value="Hedgehog_signalling_dom"/>
</dbReference>
<dbReference type="PANTHER" id="PTHR11889">
    <property type="entry name" value="HEDGEHOG"/>
    <property type="match status" value="1"/>
</dbReference>
<dbReference type="PANTHER" id="PTHR11889:SF36">
    <property type="entry name" value="SONIC HEDGEHOG PROTEIN"/>
    <property type="match status" value="1"/>
</dbReference>
<dbReference type="Pfam" id="PF01085">
    <property type="entry name" value="HH_signal"/>
    <property type="match status" value="1"/>
</dbReference>
<dbReference type="PRINTS" id="PR00632">
    <property type="entry name" value="SONICHHOG"/>
</dbReference>
<dbReference type="SUPFAM" id="SSF55166">
    <property type="entry name" value="Hedgehog/DD-peptidase"/>
    <property type="match status" value="1"/>
</dbReference>
<feature type="chain" id="PRO_0000058753" description="Tiggy-winkle hedgehog protein">
    <location>
        <begin position="1" status="less than"/>
        <end position="53" status="greater than"/>
    </location>
</feature>
<feature type="binding site" evidence="2">
    <location>
        <position position="19"/>
    </location>
    <ligand>
        <name>Ca(2+)</name>
        <dbReference type="ChEBI" id="CHEBI:29108"/>
        <label>1</label>
    </ligand>
</feature>
<feature type="binding site" evidence="2">
    <location>
        <position position="20"/>
    </location>
    <ligand>
        <name>Ca(2+)</name>
        <dbReference type="ChEBI" id="CHEBI:29108"/>
        <label>1</label>
    </ligand>
</feature>
<feature type="binding site" evidence="2">
    <location>
        <position position="20"/>
    </location>
    <ligand>
        <name>Ca(2+)</name>
        <dbReference type="ChEBI" id="CHEBI:29108"/>
        <label>2</label>
    </ligand>
</feature>
<feature type="binding site" evidence="2">
    <location>
        <position position="23"/>
    </location>
    <ligand>
        <name>Ca(2+)</name>
        <dbReference type="ChEBI" id="CHEBI:29108"/>
        <label>2</label>
    </ligand>
</feature>
<feature type="binding site" evidence="2">
    <location>
        <position position="25"/>
    </location>
    <ligand>
        <name>Ca(2+)</name>
        <dbReference type="ChEBI" id="CHEBI:29108"/>
        <label>2</label>
    </ligand>
</feature>
<feature type="binding site" evidence="2">
    <location>
        <position position="34"/>
    </location>
    <ligand>
        <name>Zn(2+)</name>
        <dbReference type="ChEBI" id="CHEBI:29105"/>
    </ligand>
</feature>
<feature type="binding site" evidence="2">
    <location>
        <position position="41"/>
    </location>
    <ligand>
        <name>Zn(2+)</name>
        <dbReference type="ChEBI" id="CHEBI:29105"/>
    </ligand>
</feature>
<feature type="non-terminal residue">
    <location>
        <position position="1"/>
    </location>
</feature>
<feature type="non-terminal residue">
    <location>
        <position position="53"/>
    </location>
</feature>
<gene>
    <name type="primary">twhh</name>
</gene>
<evidence type="ECO:0000250" key="1"/>
<evidence type="ECO:0000250" key="2">
    <source>
        <dbReference type="UniProtKB" id="Q15465"/>
    </source>
</evidence>
<evidence type="ECO:0000305" key="3"/>